<proteinExistence type="evidence at protein level"/>
<evidence type="ECO:0000250" key="1">
    <source>
        <dbReference type="UniProtKB" id="P56879"/>
    </source>
</evidence>
<evidence type="ECO:0000255" key="2"/>
<evidence type="ECO:0000269" key="3">
    <source>
    </source>
</evidence>
<evidence type="ECO:0000269" key="4">
    <source>
    </source>
</evidence>
<evidence type="ECO:0000305" key="5"/>
<feature type="peptide" id="PRO_0000294954" description="Cycloviolacin-O25" evidence="3">
    <location>
        <begin position="1"/>
        <end position="31"/>
    </location>
</feature>
<feature type="disulfide bond" evidence="1">
    <location>
        <begin position="4"/>
        <end position="21"/>
    </location>
</feature>
<feature type="disulfide bond" evidence="1">
    <location>
        <begin position="8"/>
        <end position="23"/>
    </location>
</feature>
<feature type="disulfide bond" evidence="1">
    <location>
        <begin position="13"/>
        <end position="28"/>
    </location>
</feature>
<feature type="cross-link" description="Cyclopeptide (Asp-Asn)" evidence="3">
    <location>
        <begin position="1"/>
        <end position="31"/>
    </location>
</feature>
<comment type="function">
    <text evidence="5">Probably participates in a plant defense mechanism.</text>
</comment>
<comment type="tissue specificity">
    <text evidence="4">Expressed in roots and runners but not in leaves, petals and petioles (at protein level).</text>
</comment>
<comment type="domain">
    <text evidence="1">The presence of a 'disulfide through disulfide knot' structurally defines this protein as a knottin.</text>
</comment>
<comment type="PTM">
    <text evidence="3">This is a cyclic peptide.</text>
</comment>
<comment type="mass spectrometry" mass="3361.5" method="MALDI" evidence="3"/>
<comment type="similarity">
    <text evidence="2">Belongs to the cyclotide family. Bracelet subfamily.</text>
</comment>
<comment type="caution">
    <text evidence="3">This peptide is cyclic. The start position was chosen by similarity to OAK1 (kalata-B1) for which the DNA sequence is known.</text>
</comment>
<sequence length="31" mass="3388">DIFCGETCAFIPCITHVPGTCSCKSKVCYFN</sequence>
<protein>
    <recommendedName>
        <fullName>Cycloviolacin-O25</fullName>
    </recommendedName>
</protein>
<name>CYO25_VIOOD</name>
<organism>
    <name type="scientific">Viola odorata</name>
    <name type="common">Sweet violet</name>
    <dbReference type="NCBI Taxonomy" id="97441"/>
    <lineage>
        <taxon>Eukaryota</taxon>
        <taxon>Viridiplantae</taxon>
        <taxon>Streptophyta</taxon>
        <taxon>Embryophyta</taxon>
        <taxon>Tracheophyta</taxon>
        <taxon>Spermatophyta</taxon>
        <taxon>Magnoliopsida</taxon>
        <taxon>eudicotyledons</taxon>
        <taxon>Gunneridae</taxon>
        <taxon>Pentapetalae</taxon>
        <taxon>rosids</taxon>
        <taxon>fabids</taxon>
        <taxon>Malpighiales</taxon>
        <taxon>Violaceae</taxon>
        <taxon>Viola</taxon>
        <taxon>Viola subgen. Viola</taxon>
        <taxon>Viola sect. Viola</taxon>
        <taxon>Viola subsect. Viola</taxon>
    </lineage>
</organism>
<keyword id="KW-0903">Direct protein sequencing</keyword>
<keyword id="KW-1015">Disulfide bond</keyword>
<keyword id="KW-0960">Knottin</keyword>
<keyword id="KW-0611">Plant defense</keyword>
<dbReference type="SMR" id="P85188"/>
<dbReference type="GO" id="GO:0006952">
    <property type="term" value="P:defense response"/>
    <property type="evidence" value="ECO:0007669"/>
    <property type="project" value="UniProtKB-KW"/>
</dbReference>
<dbReference type="InterPro" id="IPR005535">
    <property type="entry name" value="Cyclotide"/>
</dbReference>
<dbReference type="InterPro" id="IPR036146">
    <property type="entry name" value="Cyclotide_sf"/>
</dbReference>
<dbReference type="Pfam" id="PF03784">
    <property type="entry name" value="Cyclotide"/>
    <property type="match status" value="1"/>
</dbReference>
<dbReference type="PIRSF" id="PIRSF037891">
    <property type="entry name" value="Cycloviolacin"/>
    <property type="match status" value="1"/>
</dbReference>
<dbReference type="SUPFAM" id="SSF57038">
    <property type="entry name" value="Cyclotides"/>
    <property type="match status" value="1"/>
</dbReference>
<accession>P85188</accession>
<reference evidence="5" key="1">
    <citation type="journal article" date="2006" name="Biochem. J.">
        <title>A novel suite of cyclotides from Viola odorata: sequence variation and the implications for structure, function and stability.</title>
        <authorList>
            <person name="Ireland D.C."/>
            <person name="Colgrave M.L."/>
            <person name="Craik D.J."/>
        </authorList>
    </citation>
    <scope>PROTEIN SEQUENCE</scope>
    <scope>MASS SPECTROMETRY</scope>
</reference>
<reference key="2">
    <citation type="journal article" date="2017" name="J. Nat. Prod.">
        <title>Cyclotides from the Indian Medicinal Plant Viola odorata (Banafsha): Identification and Characterization.</title>
        <authorList>
            <person name="Narayani M."/>
            <person name="Chadha A."/>
            <person name="Srivastava S."/>
        </authorList>
    </citation>
    <scope>TISSUE SPECIFICITY</scope>
    <scope>IDENTIFICATION BY MASS SPECTROMETRY</scope>
</reference>